<comment type="cofactor">
    <cofactor evidence="1">
        <name>heme</name>
        <dbReference type="ChEBI" id="CHEBI:30413"/>
    </cofactor>
</comment>
<comment type="similarity">
    <text evidence="2">Belongs to the cytochrome P450 family.</text>
</comment>
<keyword id="KW-0349">Heme</keyword>
<keyword id="KW-0408">Iron</keyword>
<keyword id="KW-0479">Metal-binding</keyword>
<keyword id="KW-0503">Monooxygenase</keyword>
<keyword id="KW-0560">Oxidoreductase</keyword>
<keyword id="KW-1185">Reference proteome</keyword>
<name>CP139_MYCBO</name>
<feature type="chain" id="PRO_0000052299" description="Putative cytochrome P450 139">
    <location>
        <begin position="1"/>
        <end position="430"/>
    </location>
</feature>
<feature type="binding site" description="axial binding residue" evidence="1">
    <location>
        <position position="372"/>
    </location>
    <ligand>
        <name>heme</name>
        <dbReference type="ChEBI" id="CHEBI:30413"/>
    </ligand>
    <ligandPart>
        <name>Fe</name>
        <dbReference type="ChEBI" id="CHEBI:18248"/>
    </ligandPart>
</feature>
<protein>
    <recommendedName>
        <fullName>Putative cytochrome P450 139</fullName>
        <ecNumber>1.14.-.-</ecNumber>
    </recommendedName>
</protein>
<dbReference type="EC" id="1.14.-.-"/>
<dbReference type="EMBL" id="LT708304">
    <property type="protein sequence ID" value="SIU00297.1"/>
    <property type="molecule type" value="Genomic_DNA"/>
</dbReference>
<dbReference type="RefSeq" id="NP_855346.1">
    <property type="nucleotide sequence ID" value="NC_002945.3"/>
</dbReference>
<dbReference type="RefSeq" id="WP_003901231.1">
    <property type="nucleotide sequence ID" value="NC_002945.4"/>
</dbReference>
<dbReference type="SMR" id="P63720"/>
<dbReference type="KEGG" id="mbo:BQ2027_MB1694C"/>
<dbReference type="PATRIC" id="fig|233413.5.peg.1847"/>
<dbReference type="Proteomes" id="UP000001419">
    <property type="component" value="Chromosome"/>
</dbReference>
<dbReference type="GO" id="GO:0020037">
    <property type="term" value="F:heme binding"/>
    <property type="evidence" value="ECO:0007669"/>
    <property type="project" value="InterPro"/>
</dbReference>
<dbReference type="GO" id="GO:0005506">
    <property type="term" value="F:iron ion binding"/>
    <property type="evidence" value="ECO:0007669"/>
    <property type="project" value="InterPro"/>
</dbReference>
<dbReference type="GO" id="GO:0004497">
    <property type="term" value="F:monooxygenase activity"/>
    <property type="evidence" value="ECO:0007669"/>
    <property type="project" value="UniProtKB-KW"/>
</dbReference>
<dbReference type="GO" id="GO:0016705">
    <property type="term" value="F:oxidoreductase activity, acting on paired donors, with incorporation or reduction of molecular oxygen"/>
    <property type="evidence" value="ECO:0007669"/>
    <property type="project" value="InterPro"/>
</dbReference>
<dbReference type="CDD" id="cd11053">
    <property type="entry name" value="CYP110-like"/>
    <property type="match status" value="1"/>
</dbReference>
<dbReference type="Gene3D" id="1.10.630.10">
    <property type="entry name" value="Cytochrome P450"/>
    <property type="match status" value="1"/>
</dbReference>
<dbReference type="InterPro" id="IPR001128">
    <property type="entry name" value="Cyt_P450"/>
</dbReference>
<dbReference type="InterPro" id="IPR017972">
    <property type="entry name" value="Cyt_P450_CS"/>
</dbReference>
<dbReference type="InterPro" id="IPR002403">
    <property type="entry name" value="Cyt_P450_E_grp-IV"/>
</dbReference>
<dbReference type="InterPro" id="IPR036396">
    <property type="entry name" value="Cyt_P450_sf"/>
</dbReference>
<dbReference type="InterPro" id="IPR050121">
    <property type="entry name" value="Cytochrome_P450_monoxygenase"/>
</dbReference>
<dbReference type="PANTHER" id="PTHR24305">
    <property type="entry name" value="CYTOCHROME P450"/>
    <property type="match status" value="1"/>
</dbReference>
<dbReference type="PANTHER" id="PTHR24305:SF166">
    <property type="entry name" value="CYTOCHROME P450 12A4, MITOCHONDRIAL-RELATED"/>
    <property type="match status" value="1"/>
</dbReference>
<dbReference type="Pfam" id="PF00067">
    <property type="entry name" value="p450"/>
    <property type="match status" value="1"/>
</dbReference>
<dbReference type="PRINTS" id="PR00465">
    <property type="entry name" value="EP450IV"/>
</dbReference>
<dbReference type="PRINTS" id="PR00385">
    <property type="entry name" value="P450"/>
</dbReference>
<dbReference type="SUPFAM" id="SSF48264">
    <property type="entry name" value="Cytochrome P450"/>
    <property type="match status" value="1"/>
</dbReference>
<dbReference type="PROSITE" id="PS00086">
    <property type="entry name" value="CYTOCHROME_P450"/>
    <property type="match status" value="1"/>
</dbReference>
<evidence type="ECO:0000250" key="1"/>
<evidence type="ECO:0000305" key="2"/>
<reference key="1">
    <citation type="journal article" date="2003" name="Proc. Natl. Acad. Sci. U.S.A.">
        <title>The complete genome sequence of Mycobacterium bovis.</title>
        <authorList>
            <person name="Garnier T."/>
            <person name="Eiglmeier K."/>
            <person name="Camus J.-C."/>
            <person name="Medina N."/>
            <person name="Mansoor H."/>
            <person name="Pryor M."/>
            <person name="Duthoy S."/>
            <person name="Grondin S."/>
            <person name="Lacroix C."/>
            <person name="Monsempe C."/>
            <person name="Simon S."/>
            <person name="Harris B."/>
            <person name="Atkin R."/>
            <person name="Doggett J."/>
            <person name="Mayes R."/>
            <person name="Keating L."/>
            <person name="Wheeler P.R."/>
            <person name="Parkhill J."/>
            <person name="Barrell B.G."/>
            <person name="Cole S.T."/>
            <person name="Gordon S.V."/>
            <person name="Hewinson R.G."/>
        </authorList>
    </citation>
    <scope>NUCLEOTIDE SEQUENCE [LARGE SCALE GENOMIC DNA]</scope>
    <source>
        <strain>ATCC BAA-935 / AF2122/97</strain>
    </source>
</reference>
<reference key="2">
    <citation type="journal article" date="2017" name="Genome Announc.">
        <title>Updated reference genome sequence and annotation of Mycobacterium bovis AF2122/97.</title>
        <authorList>
            <person name="Malone K.M."/>
            <person name="Farrell D."/>
            <person name="Stuber T.P."/>
            <person name="Schubert O.T."/>
            <person name="Aebersold R."/>
            <person name="Robbe-Austerman S."/>
            <person name="Gordon S.V."/>
        </authorList>
    </citation>
    <scope>NUCLEOTIDE SEQUENCE [LARGE SCALE GENOMIC DNA]</scope>
    <scope>GENOME REANNOTATION</scope>
    <source>
        <strain>ATCC BAA-935 / AF2122/97</strain>
    </source>
</reference>
<organism>
    <name type="scientific">Mycobacterium bovis (strain ATCC BAA-935 / AF2122/97)</name>
    <dbReference type="NCBI Taxonomy" id="233413"/>
    <lineage>
        <taxon>Bacteria</taxon>
        <taxon>Bacillati</taxon>
        <taxon>Actinomycetota</taxon>
        <taxon>Actinomycetes</taxon>
        <taxon>Mycobacteriales</taxon>
        <taxon>Mycobacteriaceae</taxon>
        <taxon>Mycobacterium</taxon>
        <taxon>Mycobacterium tuberculosis complex</taxon>
    </lineage>
</organism>
<sequence>MRYPLGEALLALYRWRGPLINAGVGGHGYTYLLGAEANRFVFANADAFSWSQTFESLVPVDGPTALIVSDGADHRRRRSVVAPGLRHHHVQRYVATMVSNIDTVIDGWQPGQRLDIYQELRSAVRRSTAESLFGQRLAVHSDFLGEQLQPLLDLTRRPPQVMRLQQRVNSPGWRRAMAARKRIDDLIDAQIADARTAPRPDDHMLTTLISGCSEEGTTLSDNEIRDSIVSLITAGYETTSGALAWAIYALLTVPGTWESAASEVARVLGGRVPAADDLSALTYLNGVVHETLRLYSPGVISARRVLRDLWFDGHRIRAGRLLIFSAYVTHRLPEIWPEPTEFRPLRWDPNAADYRKPAPHEFIPFSGGLHRCIGAVMATTEMTVILARLVARAMLQLPAQRTHRIRAANFAALRPWPGLTVEIRKSAPAQ</sequence>
<proteinExistence type="inferred from homology"/>
<accession>P63720</accession>
<accession>A0A1R3XYZ7</accession>
<accession>O86330</accession>
<accession>X2BI36</accession>
<gene>
    <name type="primary">cyp139</name>
    <name type="ordered locus">BQ2027_MB1694C</name>
</gene>